<proteinExistence type="inferred from homology"/>
<protein>
    <recommendedName>
        <fullName evidence="1">4-hydroxy-3-methylbut-2-enyl diphosphate reductase</fullName>
        <shortName evidence="1">HMBPP reductase</shortName>
        <ecNumber evidence="1">1.17.7.4</ecNumber>
    </recommendedName>
</protein>
<organism>
    <name type="scientific">Shigella sonnei (strain Ss046)</name>
    <dbReference type="NCBI Taxonomy" id="300269"/>
    <lineage>
        <taxon>Bacteria</taxon>
        <taxon>Pseudomonadati</taxon>
        <taxon>Pseudomonadota</taxon>
        <taxon>Gammaproteobacteria</taxon>
        <taxon>Enterobacterales</taxon>
        <taxon>Enterobacteriaceae</taxon>
        <taxon>Shigella</taxon>
    </lineage>
</organism>
<feature type="chain" id="PRO_1000021180" description="4-hydroxy-3-methylbut-2-enyl diphosphate reductase">
    <location>
        <begin position="1"/>
        <end position="316"/>
    </location>
</feature>
<feature type="active site" description="Proton donor" evidence="1">
    <location>
        <position position="126"/>
    </location>
</feature>
<feature type="binding site" evidence="1">
    <location>
        <position position="12"/>
    </location>
    <ligand>
        <name>[4Fe-4S] cluster</name>
        <dbReference type="ChEBI" id="CHEBI:49883"/>
    </ligand>
</feature>
<feature type="binding site" evidence="1">
    <location>
        <position position="41"/>
    </location>
    <ligand>
        <name>(2E)-4-hydroxy-3-methylbut-2-enyl diphosphate</name>
        <dbReference type="ChEBI" id="CHEBI:128753"/>
    </ligand>
</feature>
<feature type="binding site" evidence="1">
    <location>
        <position position="41"/>
    </location>
    <ligand>
        <name>dimethylallyl diphosphate</name>
        <dbReference type="ChEBI" id="CHEBI:57623"/>
    </ligand>
</feature>
<feature type="binding site" evidence="1">
    <location>
        <position position="41"/>
    </location>
    <ligand>
        <name>isopentenyl diphosphate</name>
        <dbReference type="ChEBI" id="CHEBI:128769"/>
    </ligand>
</feature>
<feature type="binding site" evidence="1">
    <location>
        <position position="74"/>
    </location>
    <ligand>
        <name>(2E)-4-hydroxy-3-methylbut-2-enyl diphosphate</name>
        <dbReference type="ChEBI" id="CHEBI:128753"/>
    </ligand>
</feature>
<feature type="binding site" evidence="1">
    <location>
        <position position="74"/>
    </location>
    <ligand>
        <name>dimethylallyl diphosphate</name>
        <dbReference type="ChEBI" id="CHEBI:57623"/>
    </ligand>
</feature>
<feature type="binding site" evidence="1">
    <location>
        <position position="74"/>
    </location>
    <ligand>
        <name>isopentenyl diphosphate</name>
        <dbReference type="ChEBI" id="CHEBI:128769"/>
    </ligand>
</feature>
<feature type="binding site" evidence="1">
    <location>
        <position position="96"/>
    </location>
    <ligand>
        <name>[4Fe-4S] cluster</name>
        <dbReference type="ChEBI" id="CHEBI:49883"/>
    </ligand>
</feature>
<feature type="binding site" evidence="1">
    <location>
        <position position="124"/>
    </location>
    <ligand>
        <name>(2E)-4-hydroxy-3-methylbut-2-enyl diphosphate</name>
        <dbReference type="ChEBI" id="CHEBI:128753"/>
    </ligand>
</feature>
<feature type="binding site" evidence="1">
    <location>
        <position position="124"/>
    </location>
    <ligand>
        <name>dimethylallyl diphosphate</name>
        <dbReference type="ChEBI" id="CHEBI:57623"/>
    </ligand>
</feature>
<feature type="binding site" evidence="1">
    <location>
        <position position="124"/>
    </location>
    <ligand>
        <name>isopentenyl diphosphate</name>
        <dbReference type="ChEBI" id="CHEBI:128769"/>
    </ligand>
</feature>
<feature type="binding site" evidence="1">
    <location>
        <position position="167"/>
    </location>
    <ligand>
        <name>(2E)-4-hydroxy-3-methylbut-2-enyl diphosphate</name>
        <dbReference type="ChEBI" id="CHEBI:128753"/>
    </ligand>
</feature>
<feature type="binding site" evidence="1">
    <location>
        <position position="197"/>
    </location>
    <ligand>
        <name>[4Fe-4S] cluster</name>
        <dbReference type="ChEBI" id="CHEBI:49883"/>
    </ligand>
</feature>
<feature type="binding site" evidence="1">
    <location>
        <position position="225"/>
    </location>
    <ligand>
        <name>(2E)-4-hydroxy-3-methylbut-2-enyl diphosphate</name>
        <dbReference type="ChEBI" id="CHEBI:128753"/>
    </ligand>
</feature>
<feature type="binding site" evidence="1">
    <location>
        <position position="225"/>
    </location>
    <ligand>
        <name>dimethylallyl diphosphate</name>
        <dbReference type="ChEBI" id="CHEBI:57623"/>
    </ligand>
</feature>
<feature type="binding site" evidence="1">
    <location>
        <position position="225"/>
    </location>
    <ligand>
        <name>isopentenyl diphosphate</name>
        <dbReference type="ChEBI" id="CHEBI:128769"/>
    </ligand>
</feature>
<feature type="binding site" evidence="1">
    <location>
        <position position="226"/>
    </location>
    <ligand>
        <name>(2E)-4-hydroxy-3-methylbut-2-enyl diphosphate</name>
        <dbReference type="ChEBI" id="CHEBI:128753"/>
    </ligand>
</feature>
<feature type="binding site" evidence="1">
    <location>
        <position position="226"/>
    </location>
    <ligand>
        <name>dimethylallyl diphosphate</name>
        <dbReference type="ChEBI" id="CHEBI:57623"/>
    </ligand>
</feature>
<feature type="binding site" evidence="1">
    <location>
        <position position="226"/>
    </location>
    <ligand>
        <name>isopentenyl diphosphate</name>
        <dbReference type="ChEBI" id="CHEBI:128769"/>
    </ligand>
</feature>
<feature type="binding site" evidence="1">
    <location>
        <position position="227"/>
    </location>
    <ligand>
        <name>(2E)-4-hydroxy-3-methylbut-2-enyl diphosphate</name>
        <dbReference type="ChEBI" id="CHEBI:128753"/>
    </ligand>
</feature>
<feature type="binding site" evidence="1">
    <location>
        <position position="227"/>
    </location>
    <ligand>
        <name>dimethylallyl diphosphate</name>
        <dbReference type="ChEBI" id="CHEBI:57623"/>
    </ligand>
</feature>
<feature type="binding site" evidence="1">
    <location>
        <position position="227"/>
    </location>
    <ligand>
        <name>isopentenyl diphosphate</name>
        <dbReference type="ChEBI" id="CHEBI:128769"/>
    </ligand>
</feature>
<feature type="binding site" evidence="1">
    <location>
        <position position="269"/>
    </location>
    <ligand>
        <name>(2E)-4-hydroxy-3-methylbut-2-enyl diphosphate</name>
        <dbReference type="ChEBI" id="CHEBI:128753"/>
    </ligand>
</feature>
<feature type="binding site" evidence="1">
    <location>
        <position position="269"/>
    </location>
    <ligand>
        <name>dimethylallyl diphosphate</name>
        <dbReference type="ChEBI" id="CHEBI:57623"/>
    </ligand>
</feature>
<feature type="binding site" evidence="1">
    <location>
        <position position="269"/>
    </location>
    <ligand>
        <name>isopentenyl diphosphate</name>
        <dbReference type="ChEBI" id="CHEBI:128769"/>
    </ligand>
</feature>
<name>ISPH_SHISS</name>
<keyword id="KW-0004">4Fe-4S</keyword>
<keyword id="KW-0408">Iron</keyword>
<keyword id="KW-0411">Iron-sulfur</keyword>
<keyword id="KW-0414">Isoprene biosynthesis</keyword>
<keyword id="KW-0479">Metal-binding</keyword>
<keyword id="KW-0560">Oxidoreductase</keyword>
<keyword id="KW-1185">Reference proteome</keyword>
<gene>
    <name evidence="1" type="primary">ispH</name>
    <name type="ordered locus">SSON_0034</name>
</gene>
<evidence type="ECO:0000255" key="1">
    <source>
        <dbReference type="HAMAP-Rule" id="MF_00191"/>
    </source>
</evidence>
<dbReference type="EC" id="1.17.7.4" evidence="1"/>
<dbReference type="EMBL" id="CP000038">
    <property type="protein sequence ID" value="AAZ86831.1"/>
    <property type="molecule type" value="Genomic_DNA"/>
</dbReference>
<dbReference type="RefSeq" id="WP_001166395.1">
    <property type="nucleotide sequence ID" value="NC_007384.1"/>
</dbReference>
<dbReference type="SMR" id="Q3Z5Y1"/>
<dbReference type="GeneID" id="93777407"/>
<dbReference type="KEGG" id="ssn:SSON_0034"/>
<dbReference type="HOGENOM" id="CLU_027486_1_0_6"/>
<dbReference type="UniPathway" id="UPA00056">
    <property type="reaction ID" value="UER00097"/>
</dbReference>
<dbReference type="UniPathway" id="UPA00059">
    <property type="reaction ID" value="UER00105"/>
</dbReference>
<dbReference type="Proteomes" id="UP000002529">
    <property type="component" value="Chromosome"/>
</dbReference>
<dbReference type="GO" id="GO:0051539">
    <property type="term" value="F:4 iron, 4 sulfur cluster binding"/>
    <property type="evidence" value="ECO:0007669"/>
    <property type="project" value="UniProtKB-UniRule"/>
</dbReference>
<dbReference type="GO" id="GO:0051745">
    <property type="term" value="F:4-hydroxy-3-methylbut-2-enyl diphosphate reductase activity"/>
    <property type="evidence" value="ECO:0007669"/>
    <property type="project" value="UniProtKB-UniRule"/>
</dbReference>
<dbReference type="GO" id="GO:0046872">
    <property type="term" value="F:metal ion binding"/>
    <property type="evidence" value="ECO:0007669"/>
    <property type="project" value="UniProtKB-KW"/>
</dbReference>
<dbReference type="GO" id="GO:0050992">
    <property type="term" value="P:dimethylallyl diphosphate biosynthetic process"/>
    <property type="evidence" value="ECO:0007669"/>
    <property type="project" value="UniProtKB-UniRule"/>
</dbReference>
<dbReference type="GO" id="GO:0019288">
    <property type="term" value="P:isopentenyl diphosphate biosynthetic process, methylerythritol 4-phosphate pathway"/>
    <property type="evidence" value="ECO:0007669"/>
    <property type="project" value="UniProtKB-UniRule"/>
</dbReference>
<dbReference type="GO" id="GO:0016114">
    <property type="term" value="P:terpenoid biosynthetic process"/>
    <property type="evidence" value="ECO:0007669"/>
    <property type="project" value="UniProtKB-UniRule"/>
</dbReference>
<dbReference type="CDD" id="cd13944">
    <property type="entry name" value="lytB_ispH"/>
    <property type="match status" value="1"/>
</dbReference>
<dbReference type="FunFam" id="3.40.1010.20:FF:000001">
    <property type="entry name" value="4-hydroxy-3-methylbut-2-enyl diphosphate reductase"/>
    <property type="match status" value="1"/>
</dbReference>
<dbReference type="FunFam" id="3.40.50.11270:FF:000001">
    <property type="entry name" value="4-hydroxy-3-methylbut-2-enyl diphosphate reductase"/>
    <property type="match status" value="1"/>
</dbReference>
<dbReference type="Gene3D" id="3.40.50.11270">
    <property type="match status" value="1"/>
</dbReference>
<dbReference type="Gene3D" id="3.40.1010.20">
    <property type="entry name" value="4-hydroxy-3-methylbut-2-enyl diphosphate reductase, catalytic domain"/>
    <property type="match status" value="2"/>
</dbReference>
<dbReference type="HAMAP" id="MF_00191">
    <property type="entry name" value="IspH"/>
    <property type="match status" value="1"/>
</dbReference>
<dbReference type="InterPro" id="IPR003451">
    <property type="entry name" value="LytB/IspH"/>
</dbReference>
<dbReference type="NCBIfam" id="TIGR00216">
    <property type="entry name" value="ispH_lytB"/>
    <property type="match status" value="1"/>
</dbReference>
<dbReference type="NCBIfam" id="NF002188">
    <property type="entry name" value="PRK01045.1-2"/>
    <property type="match status" value="1"/>
</dbReference>
<dbReference type="NCBIfam" id="NF002190">
    <property type="entry name" value="PRK01045.1-4"/>
    <property type="match status" value="1"/>
</dbReference>
<dbReference type="PANTHER" id="PTHR30426">
    <property type="entry name" value="4-HYDROXY-3-METHYLBUT-2-ENYL DIPHOSPHATE REDUCTASE"/>
    <property type="match status" value="1"/>
</dbReference>
<dbReference type="PANTHER" id="PTHR30426:SF0">
    <property type="entry name" value="4-HYDROXY-3-METHYLBUT-2-ENYL DIPHOSPHATE REDUCTASE"/>
    <property type="match status" value="1"/>
</dbReference>
<dbReference type="Pfam" id="PF02401">
    <property type="entry name" value="LYTB"/>
    <property type="match status" value="1"/>
</dbReference>
<sequence length="316" mass="34775">MQILLANPRGFCAGVDRAISIVENALAIYGAPIYVRHEVVHNRYVVDSLRERGAIFIEQISEVPDGAILIFSAHGVSQAVRNEAKSRDLTVFDATCPLVTKVHMEVARASRRGEESILIGHAGHPEVEGTMGQYSNPEGGMYLVESPDDVWKLTVKNEEKLSFMTQTTLSVDDTSDVIDALRKRFPKIVGPRKDDICYATTNRQEAVRALAEQAEVVLVVGSKNSSNSNRLAELAQRMGKRAFLIDDAKDIQEEWVKEVKCVGVTAGASAPDILVQNVVARLQQLGGGEAIPLEGREENIVFEVPKELRVDIREVD</sequence>
<reference key="1">
    <citation type="journal article" date="2005" name="Nucleic Acids Res.">
        <title>Genome dynamics and diversity of Shigella species, the etiologic agents of bacillary dysentery.</title>
        <authorList>
            <person name="Yang F."/>
            <person name="Yang J."/>
            <person name="Zhang X."/>
            <person name="Chen L."/>
            <person name="Jiang Y."/>
            <person name="Yan Y."/>
            <person name="Tang X."/>
            <person name="Wang J."/>
            <person name="Xiong Z."/>
            <person name="Dong J."/>
            <person name="Xue Y."/>
            <person name="Zhu Y."/>
            <person name="Xu X."/>
            <person name="Sun L."/>
            <person name="Chen S."/>
            <person name="Nie H."/>
            <person name="Peng J."/>
            <person name="Xu J."/>
            <person name="Wang Y."/>
            <person name="Yuan Z."/>
            <person name="Wen Y."/>
            <person name="Yao Z."/>
            <person name="Shen Y."/>
            <person name="Qiang B."/>
            <person name="Hou Y."/>
            <person name="Yu J."/>
            <person name="Jin Q."/>
        </authorList>
    </citation>
    <scope>NUCLEOTIDE SEQUENCE [LARGE SCALE GENOMIC DNA]</scope>
    <source>
        <strain>Ss046</strain>
    </source>
</reference>
<comment type="function">
    <text evidence="1">Catalyzes the conversion of 1-hydroxy-2-methyl-2-(E)-butenyl 4-diphosphate (HMBPP) into a mixture of isopentenyl diphosphate (IPP) and dimethylallyl diphosphate (DMAPP). Acts in the terminal step of the DOXP/MEP pathway for isoprenoid precursor biosynthesis.</text>
</comment>
<comment type="catalytic activity">
    <reaction evidence="1">
        <text>isopentenyl diphosphate + 2 oxidized [2Fe-2S]-[ferredoxin] + H2O = (2E)-4-hydroxy-3-methylbut-2-enyl diphosphate + 2 reduced [2Fe-2S]-[ferredoxin] + 2 H(+)</text>
        <dbReference type="Rhea" id="RHEA:24488"/>
        <dbReference type="Rhea" id="RHEA-COMP:10000"/>
        <dbReference type="Rhea" id="RHEA-COMP:10001"/>
        <dbReference type="ChEBI" id="CHEBI:15377"/>
        <dbReference type="ChEBI" id="CHEBI:15378"/>
        <dbReference type="ChEBI" id="CHEBI:33737"/>
        <dbReference type="ChEBI" id="CHEBI:33738"/>
        <dbReference type="ChEBI" id="CHEBI:128753"/>
        <dbReference type="ChEBI" id="CHEBI:128769"/>
        <dbReference type="EC" id="1.17.7.4"/>
    </reaction>
</comment>
<comment type="catalytic activity">
    <reaction evidence="1">
        <text>dimethylallyl diphosphate + 2 oxidized [2Fe-2S]-[ferredoxin] + H2O = (2E)-4-hydroxy-3-methylbut-2-enyl diphosphate + 2 reduced [2Fe-2S]-[ferredoxin] + 2 H(+)</text>
        <dbReference type="Rhea" id="RHEA:24825"/>
        <dbReference type="Rhea" id="RHEA-COMP:10000"/>
        <dbReference type="Rhea" id="RHEA-COMP:10001"/>
        <dbReference type="ChEBI" id="CHEBI:15377"/>
        <dbReference type="ChEBI" id="CHEBI:15378"/>
        <dbReference type="ChEBI" id="CHEBI:33737"/>
        <dbReference type="ChEBI" id="CHEBI:33738"/>
        <dbReference type="ChEBI" id="CHEBI:57623"/>
        <dbReference type="ChEBI" id="CHEBI:128753"/>
        <dbReference type="EC" id="1.17.7.4"/>
    </reaction>
</comment>
<comment type="cofactor">
    <cofactor evidence="1">
        <name>[4Fe-4S] cluster</name>
        <dbReference type="ChEBI" id="CHEBI:49883"/>
    </cofactor>
    <text evidence="1">Binds 1 [4Fe-4S] cluster per subunit.</text>
</comment>
<comment type="pathway">
    <text evidence="1">Isoprenoid biosynthesis; dimethylallyl diphosphate biosynthesis; dimethylallyl diphosphate from (2E)-4-hydroxy-3-methylbutenyl diphosphate: step 1/1.</text>
</comment>
<comment type="pathway">
    <text evidence="1">Isoprenoid biosynthesis; isopentenyl diphosphate biosynthesis via DXP pathway; isopentenyl diphosphate from 1-deoxy-D-xylulose 5-phosphate: step 6/6.</text>
</comment>
<comment type="subunit">
    <text evidence="1">Homodimer.</text>
</comment>
<comment type="similarity">
    <text evidence="1">Belongs to the IspH family.</text>
</comment>
<accession>Q3Z5Y1</accession>